<proteinExistence type="evidence at protein level"/>
<comment type="function">
    <text evidence="2">Has a role in meiosis.</text>
</comment>
<comment type="subcellular location">
    <subcellularLocation>
        <location evidence="3">Nucleus</location>
    </subcellularLocation>
</comment>
<evidence type="ECO:0000256" key="1">
    <source>
        <dbReference type="SAM" id="MobiDB-lite"/>
    </source>
</evidence>
<evidence type="ECO:0000269" key="2">
    <source>
    </source>
</evidence>
<evidence type="ECO:0000269" key="3">
    <source>
    </source>
</evidence>
<reference key="1">
    <citation type="journal article" date="2002" name="Nature">
        <title>The genome sequence of Schizosaccharomyces pombe.</title>
        <authorList>
            <person name="Wood V."/>
            <person name="Gwilliam R."/>
            <person name="Rajandream M.A."/>
            <person name="Lyne M.H."/>
            <person name="Lyne R."/>
            <person name="Stewart A."/>
            <person name="Sgouros J.G."/>
            <person name="Peat N."/>
            <person name="Hayles J."/>
            <person name="Baker S.G."/>
            <person name="Basham D."/>
            <person name="Bowman S."/>
            <person name="Brooks K."/>
            <person name="Brown D."/>
            <person name="Brown S."/>
            <person name="Chillingworth T."/>
            <person name="Churcher C.M."/>
            <person name="Collins M."/>
            <person name="Connor R."/>
            <person name="Cronin A."/>
            <person name="Davis P."/>
            <person name="Feltwell T."/>
            <person name="Fraser A."/>
            <person name="Gentles S."/>
            <person name="Goble A."/>
            <person name="Hamlin N."/>
            <person name="Harris D.E."/>
            <person name="Hidalgo J."/>
            <person name="Hodgson G."/>
            <person name="Holroyd S."/>
            <person name="Hornsby T."/>
            <person name="Howarth S."/>
            <person name="Huckle E.J."/>
            <person name="Hunt S."/>
            <person name="Jagels K."/>
            <person name="James K.D."/>
            <person name="Jones L."/>
            <person name="Jones M."/>
            <person name="Leather S."/>
            <person name="McDonald S."/>
            <person name="McLean J."/>
            <person name="Mooney P."/>
            <person name="Moule S."/>
            <person name="Mungall K.L."/>
            <person name="Murphy L.D."/>
            <person name="Niblett D."/>
            <person name="Odell C."/>
            <person name="Oliver K."/>
            <person name="O'Neil S."/>
            <person name="Pearson D."/>
            <person name="Quail M.A."/>
            <person name="Rabbinowitsch E."/>
            <person name="Rutherford K.M."/>
            <person name="Rutter S."/>
            <person name="Saunders D."/>
            <person name="Seeger K."/>
            <person name="Sharp S."/>
            <person name="Skelton J."/>
            <person name="Simmonds M.N."/>
            <person name="Squares R."/>
            <person name="Squares S."/>
            <person name="Stevens K."/>
            <person name="Taylor K."/>
            <person name="Taylor R.G."/>
            <person name="Tivey A."/>
            <person name="Walsh S.V."/>
            <person name="Warren T."/>
            <person name="Whitehead S."/>
            <person name="Woodward J.R."/>
            <person name="Volckaert G."/>
            <person name="Aert R."/>
            <person name="Robben J."/>
            <person name="Grymonprez B."/>
            <person name="Weltjens I."/>
            <person name="Vanstreels E."/>
            <person name="Rieger M."/>
            <person name="Schaefer M."/>
            <person name="Mueller-Auer S."/>
            <person name="Gabel C."/>
            <person name="Fuchs M."/>
            <person name="Duesterhoeft A."/>
            <person name="Fritzc C."/>
            <person name="Holzer E."/>
            <person name="Moestl D."/>
            <person name="Hilbert H."/>
            <person name="Borzym K."/>
            <person name="Langer I."/>
            <person name="Beck A."/>
            <person name="Lehrach H."/>
            <person name="Reinhardt R."/>
            <person name="Pohl T.M."/>
            <person name="Eger P."/>
            <person name="Zimmermann W."/>
            <person name="Wedler H."/>
            <person name="Wambutt R."/>
            <person name="Purnelle B."/>
            <person name="Goffeau A."/>
            <person name="Cadieu E."/>
            <person name="Dreano S."/>
            <person name="Gloux S."/>
            <person name="Lelaure V."/>
            <person name="Mottier S."/>
            <person name="Galibert F."/>
            <person name="Aves S.J."/>
            <person name="Xiang Z."/>
            <person name="Hunt C."/>
            <person name="Moore K."/>
            <person name="Hurst S.M."/>
            <person name="Lucas M."/>
            <person name="Rochet M."/>
            <person name="Gaillardin C."/>
            <person name="Tallada V.A."/>
            <person name="Garzon A."/>
            <person name="Thode G."/>
            <person name="Daga R.R."/>
            <person name="Cruzado L."/>
            <person name="Jimenez J."/>
            <person name="Sanchez M."/>
            <person name="del Rey F."/>
            <person name="Benito J."/>
            <person name="Dominguez A."/>
            <person name="Revuelta J.L."/>
            <person name="Moreno S."/>
            <person name="Armstrong J."/>
            <person name="Forsburg S.L."/>
            <person name="Cerutti L."/>
            <person name="Lowe T."/>
            <person name="McCombie W.R."/>
            <person name="Paulsen I."/>
            <person name="Potashkin J."/>
            <person name="Shpakovski G.V."/>
            <person name="Ussery D."/>
            <person name="Barrell B.G."/>
            <person name="Nurse P."/>
        </authorList>
    </citation>
    <scope>NUCLEOTIDE SEQUENCE [LARGE SCALE GENOMIC DNA]</scope>
    <source>
        <strain>972 / ATCC 24843</strain>
    </source>
</reference>
<reference key="2">
    <citation type="journal article" date="2005" name="Curr. Biol.">
        <title>A large-scale screen in S. pombe identifies seven novel genes required for critical meiotic events.</title>
        <authorList>
            <person name="Martin-Castellanos C."/>
            <person name="Blanco M."/>
            <person name="Rozalen A.E."/>
            <person name="Perez-Hidalgo L."/>
            <person name="Garcia A.I."/>
            <person name="Conde F."/>
            <person name="Mata J."/>
            <person name="Ellermeier C."/>
            <person name="Davis L."/>
            <person name="San-Segundo P."/>
            <person name="Smith G.R."/>
            <person name="Moreno S."/>
        </authorList>
    </citation>
    <scope>FUNCTION IN MEIOSIS</scope>
</reference>
<reference key="3">
    <citation type="journal article" date="2006" name="Nat. Biotechnol.">
        <title>ORFeome cloning and global analysis of protein localization in the fission yeast Schizosaccharomyces pombe.</title>
        <authorList>
            <person name="Matsuyama A."/>
            <person name="Arai R."/>
            <person name="Yashiroda Y."/>
            <person name="Shirai A."/>
            <person name="Kamata A."/>
            <person name="Sekido S."/>
            <person name="Kobayashi Y."/>
            <person name="Hashimoto A."/>
            <person name="Hamamoto M."/>
            <person name="Hiraoka Y."/>
            <person name="Horinouchi S."/>
            <person name="Yoshida M."/>
        </authorList>
    </citation>
    <scope>SUBCELLULAR LOCATION [LARGE SCALE ANALYSIS]</scope>
</reference>
<protein>
    <recommendedName>
        <fullName>Meiotically up-regulated gene 118 protein</fullName>
    </recommendedName>
</protein>
<organism>
    <name type="scientific">Schizosaccharomyces pombe (strain 972 / ATCC 24843)</name>
    <name type="common">Fission yeast</name>
    <dbReference type="NCBI Taxonomy" id="284812"/>
    <lineage>
        <taxon>Eukaryota</taxon>
        <taxon>Fungi</taxon>
        <taxon>Dikarya</taxon>
        <taxon>Ascomycota</taxon>
        <taxon>Taphrinomycotina</taxon>
        <taxon>Schizosaccharomycetes</taxon>
        <taxon>Schizosaccharomycetales</taxon>
        <taxon>Schizosaccharomycetaceae</taxon>
        <taxon>Schizosaccharomyces</taxon>
    </lineage>
</organism>
<name>MU118_SCHPO</name>
<accession>O94328</accession>
<sequence>MMNKRKRVEELGETKHRQVRQRILQEHKNDILENLAFELSDKVRRLRSNASLLASTIRMRGEMRIAAIPRAQRNMHLRDLKNHLSCNVSATPWRTKIKEFYNLDELSSQKSARQPTKTVASSSSSSSKSTTVSKSSSKSQV</sequence>
<keyword id="KW-0469">Meiosis</keyword>
<keyword id="KW-0539">Nucleus</keyword>
<keyword id="KW-1185">Reference proteome</keyword>
<dbReference type="EMBL" id="CU329671">
    <property type="protein sequence ID" value="CAA22184.2"/>
    <property type="molecule type" value="Genomic_DNA"/>
</dbReference>
<dbReference type="PIR" id="T40664">
    <property type="entry name" value="T40664"/>
</dbReference>
<dbReference type="RefSeq" id="NP_595492.2">
    <property type="nucleotide sequence ID" value="NM_001021403.2"/>
</dbReference>
<dbReference type="SMR" id="O94328"/>
<dbReference type="BioGRID" id="277687">
    <property type="interactions" value="1"/>
</dbReference>
<dbReference type="DIP" id="DIP-59224N"/>
<dbReference type="FunCoup" id="O94328">
    <property type="interactions" value="1"/>
</dbReference>
<dbReference type="IntAct" id="O94328">
    <property type="interactions" value="1"/>
</dbReference>
<dbReference type="STRING" id="284812.O94328"/>
<dbReference type="PaxDb" id="4896-SPBC725.12.1"/>
<dbReference type="EnsemblFungi" id="SPBC725.12.1">
    <property type="protein sequence ID" value="SPBC725.12.1:pep"/>
    <property type="gene ID" value="SPBC725.12"/>
</dbReference>
<dbReference type="GeneID" id="2541173"/>
<dbReference type="KEGG" id="spo:2541173"/>
<dbReference type="PomBase" id="SPBC725.12"/>
<dbReference type="VEuPathDB" id="FungiDB:SPBC725.12"/>
<dbReference type="HOGENOM" id="CLU_1856457_0_0_1"/>
<dbReference type="InParanoid" id="O94328"/>
<dbReference type="OMA" id="ASTIRMR"/>
<dbReference type="PRO" id="PR:O94328"/>
<dbReference type="Proteomes" id="UP000002485">
    <property type="component" value="Chromosome II"/>
</dbReference>
<dbReference type="GO" id="GO:0032133">
    <property type="term" value="C:chromosome passenger complex"/>
    <property type="evidence" value="ECO:0000314"/>
    <property type="project" value="PomBase"/>
</dbReference>
<dbReference type="GO" id="GO:0000776">
    <property type="term" value="C:kinetochore"/>
    <property type="evidence" value="ECO:0000314"/>
    <property type="project" value="PomBase"/>
</dbReference>
<dbReference type="GO" id="GO:0072686">
    <property type="term" value="C:mitotic spindle"/>
    <property type="evidence" value="ECO:0000314"/>
    <property type="project" value="PomBase"/>
</dbReference>
<dbReference type="GO" id="GO:1990023">
    <property type="term" value="C:mitotic spindle midzone"/>
    <property type="evidence" value="ECO:0000314"/>
    <property type="project" value="PomBase"/>
</dbReference>
<dbReference type="GO" id="GO:0005730">
    <property type="term" value="C:nucleolus"/>
    <property type="evidence" value="ECO:0000314"/>
    <property type="project" value="PomBase"/>
</dbReference>
<dbReference type="GO" id="GO:0005634">
    <property type="term" value="C:nucleus"/>
    <property type="evidence" value="ECO:0007005"/>
    <property type="project" value="PomBase"/>
</dbReference>
<dbReference type="GO" id="GO:0051321">
    <property type="term" value="P:meiotic cell cycle"/>
    <property type="evidence" value="ECO:0007669"/>
    <property type="project" value="UniProtKB-KW"/>
</dbReference>
<dbReference type="GO" id="GO:0000070">
    <property type="term" value="P:mitotic sister chromatid segregation"/>
    <property type="evidence" value="ECO:0000315"/>
    <property type="project" value="PomBase"/>
</dbReference>
<dbReference type="InterPro" id="IPR018851">
    <property type="entry name" value="Borealin_N"/>
</dbReference>
<dbReference type="Pfam" id="PF10444">
    <property type="entry name" value="Nbl1_Borealin_N"/>
    <property type="match status" value="1"/>
</dbReference>
<gene>
    <name type="primary">mug118</name>
    <name type="ORF">SPBC725.12</name>
</gene>
<feature type="chain" id="PRO_0000278506" description="Meiotically up-regulated gene 118 protein">
    <location>
        <begin position="1"/>
        <end position="141"/>
    </location>
</feature>
<feature type="region of interest" description="Disordered" evidence="1">
    <location>
        <begin position="106"/>
        <end position="141"/>
    </location>
</feature>
<feature type="compositionally biased region" description="Polar residues" evidence="1">
    <location>
        <begin position="106"/>
        <end position="115"/>
    </location>
</feature>
<feature type="compositionally biased region" description="Low complexity" evidence="1">
    <location>
        <begin position="116"/>
        <end position="141"/>
    </location>
</feature>